<reference key="1">
    <citation type="journal article" date="2000" name="Biochim. Biophys. Acta">
        <title>Identification of three new members of the phospholipid scramblase gene family.</title>
        <authorList>
            <person name="Wiedmer T."/>
            <person name="Zhou Q."/>
            <person name="Kwoh D.Y."/>
            <person name="Sims P.J."/>
        </authorList>
    </citation>
    <scope>NUCLEOTIDE SEQUENCE [MRNA]</scope>
</reference>
<reference key="2">
    <citation type="journal article" date="2005" name="Science">
        <title>The transcriptional landscape of the mammalian genome.</title>
        <authorList>
            <person name="Carninci P."/>
            <person name="Kasukawa T."/>
            <person name="Katayama S."/>
            <person name="Gough J."/>
            <person name="Frith M.C."/>
            <person name="Maeda N."/>
            <person name="Oyama R."/>
            <person name="Ravasi T."/>
            <person name="Lenhard B."/>
            <person name="Wells C."/>
            <person name="Kodzius R."/>
            <person name="Shimokawa K."/>
            <person name="Bajic V.B."/>
            <person name="Brenner S.E."/>
            <person name="Batalov S."/>
            <person name="Forrest A.R."/>
            <person name="Zavolan M."/>
            <person name="Davis M.J."/>
            <person name="Wilming L.G."/>
            <person name="Aidinis V."/>
            <person name="Allen J.E."/>
            <person name="Ambesi-Impiombato A."/>
            <person name="Apweiler R."/>
            <person name="Aturaliya R.N."/>
            <person name="Bailey T.L."/>
            <person name="Bansal M."/>
            <person name="Baxter L."/>
            <person name="Beisel K.W."/>
            <person name="Bersano T."/>
            <person name="Bono H."/>
            <person name="Chalk A.M."/>
            <person name="Chiu K.P."/>
            <person name="Choudhary V."/>
            <person name="Christoffels A."/>
            <person name="Clutterbuck D.R."/>
            <person name="Crowe M.L."/>
            <person name="Dalla E."/>
            <person name="Dalrymple B.P."/>
            <person name="de Bono B."/>
            <person name="Della Gatta G."/>
            <person name="di Bernardo D."/>
            <person name="Down T."/>
            <person name="Engstrom P."/>
            <person name="Fagiolini M."/>
            <person name="Faulkner G."/>
            <person name="Fletcher C.F."/>
            <person name="Fukushima T."/>
            <person name="Furuno M."/>
            <person name="Futaki S."/>
            <person name="Gariboldi M."/>
            <person name="Georgii-Hemming P."/>
            <person name="Gingeras T.R."/>
            <person name="Gojobori T."/>
            <person name="Green R.E."/>
            <person name="Gustincich S."/>
            <person name="Harbers M."/>
            <person name="Hayashi Y."/>
            <person name="Hensch T.K."/>
            <person name="Hirokawa N."/>
            <person name="Hill D."/>
            <person name="Huminiecki L."/>
            <person name="Iacono M."/>
            <person name="Ikeo K."/>
            <person name="Iwama A."/>
            <person name="Ishikawa T."/>
            <person name="Jakt M."/>
            <person name="Kanapin A."/>
            <person name="Katoh M."/>
            <person name="Kawasawa Y."/>
            <person name="Kelso J."/>
            <person name="Kitamura H."/>
            <person name="Kitano H."/>
            <person name="Kollias G."/>
            <person name="Krishnan S.P."/>
            <person name="Kruger A."/>
            <person name="Kummerfeld S.K."/>
            <person name="Kurochkin I.V."/>
            <person name="Lareau L.F."/>
            <person name="Lazarevic D."/>
            <person name="Lipovich L."/>
            <person name="Liu J."/>
            <person name="Liuni S."/>
            <person name="McWilliam S."/>
            <person name="Madan Babu M."/>
            <person name="Madera M."/>
            <person name="Marchionni L."/>
            <person name="Matsuda H."/>
            <person name="Matsuzawa S."/>
            <person name="Miki H."/>
            <person name="Mignone F."/>
            <person name="Miyake S."/>
            <person name="Morris K."/>
            <person name="Mottagui-Tabar S."/>
            <person name="Mulder N."/>
            <person name="Nakano N."/>
            <person name="Nakauchi H."/>
            <person name="Ng P."/>
            <person name="Nilsson R."/>
            <person name="Nishiguchi S."/>
            <person name="Nishikawa S."/>
            <person name="Nori F."/>
            <person name="Ohara O."/>
            <person name="Okazaki Y."/>
            <person name="Orlando V."/>
            <person name="Pang K.C."/>
            <person name="Pavan W.J."/>
            <person name="Pavesi G."/>
            <person name="Pesole G."/>
            <person name="Petrovsky N."/>
            <person name="Piazza S."/>
            <person name="Reed J."/>
            <person name="Reid J.F."/>
            <person name="Ring B.Z."/>
            <person name="Ringwald M."/>
            <person name="Rost B."/>
            <person name="Ruan Y."/>
            <person name="Salzberg S.L."/>
            <person name="Sandelin A."/>
            <person name="Schneider C."/>
            <person name="Schoenbach C."/>
            <person name="Sekiguchi K."/>
            <person name="Semple C.A."/>
            <person name="Seno S."/>
            <person name="Sessa L."/>
            <person name="Sheng Y."/>
            <person name="Shibata Y."/>
            <person name="Shimada H."/>
            <person name="Shimada K."/>
            <person name="Silva D."/>
            <person name="Sinclair B."/>
            <person name="Sperling S."/>
            <person name="Stupka E."/>
            <person name="Sugiura K."/>
            <person name="Sultana R."/>
            <person name="Takenaka Y."/>
            <person name="Taki K."/>
            <person name="Tammoja K."/>
            <person name="Tan S.L."/>
            <person name="Tang S."/>
            <person name="Taylor M.S."/>
            <person name="Tegner J."/>
            <person name="Teichmann S.A."/>
            <person name="Ueda H.R."/>
            <person name="van Nimwegen E."/>
            <person name="Verardo R."/>
            <person name="Wei C.L."/>
            <person name="Yagi K."/>
            <person name="Yamanishi H."/>
            <person name="Zabarovsky E."/>
            <person name="Zhu S."/>
            <person name="Zimmer A."/>
            <person name="Hide W."/>
            <person name="Bult C."/>
            <person name="Grimmond S.M."/>
            <person name="Teasdale R.D."/>
            <person name="Liu E.T."/>
            <person name="Brusic V."/>
            <person name="Quackenbush J."/>
            <person name="Wahlestedt C."/>
            <person name="Mattick J.S."/>
            <person name="Hume D.A."/>
            <person name="Kai C."/>
            <person name="Sasaki D."/>
            <person name="Tomaru Y."/>
            <person name="Fukuda S."/>
            <person name="Kanamori-Katayama M."/>
            <person name="Suzuki M."/>
            <person name="Aoki J."/>
            <person name="Arakawa T."/>
            <person name="Iida J."/>
            <person name="Imamura K."/>
            <person name="Itoh M."/>
            <person name="Kato T."/>
            <person name="Kawaji H."/>
            <person name="Kawagashira N."/>
            <person name="Kawashima T."/>
            <person name="Kojima M."/>
            <person name="Kondo S."/>
            <person name="Konno H."/>
            <person name="Nakano K."/>
            <person name="Ninomiya N."/>
            <person name="Nishio T."/>
            <person name="Okada M."/>
            <person name="Plessy C."/>
            <person name="Shibata K."/>
            <person name="Shiraki T."/>
            <person name="Suzuki S."/>
            <person name="Tagami M."/>
            <person name="Waki K."/>
            <person name="Watahiki A."/>
            <person name="Okamura-Oho Y."/>
            <person name="Suzuki H."/>
            <person name="Kawai J."/>
            <person name="Hayashizaki Y."/>
        </authorList>
    </citation>
    <scope>NUCLEOTIDE SEQUENCE [LARGE SCALE MRNA]</scope>
    <source>
        <strain>C57BL/6J</strain>
        <tissue>Embryo</tissue>
        <tissue>Skin</tissue>
        <tissue>Stomach</tissue>
    </source>
</reference>
<reference key="3">
    <citation type="journal article" date="2004" name="Genome Res.">
        <title>The status, quality, and expansion of the NIH full-length cDNA project: the Mammalian Gene Collection (MGC).</title>
        <authorList>
            <consortium name="The MGC Project Team"/>
        </authorList>
    </citation>
    <scope>NUCLEOTIDE SEQUENCE [LARGE SCALE MRNA]</scope>
</reference>
<reference key="4">
    <citation type="journal article" date="2009" name="Neurochem. Int.">
        <title>Association of protein kinase C delta and phospholipid scramblase 3 in hippocampal mitochondria correlates with neuronal vulnerability to brain ischemia.</title>
        <authorList>
            <person name="Kowalczyk J.E."/>
            <person name="Beresewicz M."/>
            <person name="Gajkowska B."/>
            <person name="Zablocka B."/>
        </authorList>
    </citation>
    <scope>SUBCELLULAR LOCATION</scope>
    <scope>INTERACTION WITH PRKCD</scope>
    <source>
        <tissue>Brain</tissue>
    </source>
</reference>
<reference key="5">
    <citation type="journal article" date="2010" name="Cell">
        <title>A tissue-specific atlas of mouse protein phosphorylation and expression.</title>
        <authorList>
            <person name="Huttlin E.L."/>
            <person name="Jedrychowski M.P."/>
            <person name="Elias J.E."/>
            <person name="Goswami T."/>
            <person name="Rad R."/>
            <person name="Beausoleil S.A."/>
            <person name="Villen J."/>
            <person name="Haas W."/>
            <person name="Sowa M.E."/>
            <person name="Gygi S.P."/>
        </authorList>
    </citation>
    <scope>IDENTIFICATION BY MASS SPECTROMETRY [LARGE SCALE ANALYSIS]</scope>
    <source>
        <tissue>Brain</tissue>
        <tissue>Brown adipose tissue</tissue>
        <tissue>Heart</tissue>
        <tissue>Kidney</tissue>
        <tissue>Liver</tissue>
        <tissue>Lung</tissue>
        <tissue>Spleen</tissue>
        <tissue>Testis</tissue>
    </source>
</reference>
<reference key="6">
    <citation type="journal article" date="2011" name="Mol. Cell. Proteomics">
        <title>Proteomic profiling of S-acylated macrophage proteins identifies a role for palmitoylation in mitochondrial targeting of phospholipid scramblase 3.</title>
        <authorList>
            <person name="Merrick B.A."/>
            <person name="Dhungana S."/>
            <person name="Williams J.G."/>
            <person name="Aloor J.J."/>
            <person name="Peddada S."/>
            <person name="Tomer K.B."/>
            <person name="Fessler M.B."/>
        </authorList>
    </citation>
    <scope>FUNCTION</scope>
    <scope>PALMITOYLATION AT CYS-159; CYS-161; CYS-163; CYS-164 AND CYS-166</scope>
    <scope>MUTAGENESIS OF 159-CYS--CYS-166 AND 159-CYS--CYS-161</scope>
    <scope>SUBCELLULAR LOCATION</scope>
</reference>
<proteinExistence type="evidence at protein level"/>
<keyword id="KW-0053">Apoptosis</keyword>
<keyword id="KW-0106">Calcium</keyword>
<keyword id="KW-0445">Lipid transport</keyword>
<keyword id="KW-0449">Lipoprotein</keyword>
<keyword id="KW-0472">Membrane</keyword>
<keyword id="KW-0496">Mitochondrion</keyword>
<keyword id="KW-0999">Mitochondrion inner membrane</keyword>
<keyword id="KW-0539">Nucleus</keyword>
<keyword id="KW-0564">Palmitate</keyword>
<keyword id="KW-1185">Reference proteome</keyword>
<keyword id="KW-0677">Repeat</keyword>
<keyword id="KW-0729">SH3-binding</keyword>
<keyword id="KW-0812">Transmembrane</keyword>
<keyword id="KW-1133">Transmembrane helix</keyword>
<keyword id="KW-0813">Transport</keyword>
<organism>
    <name type="scientific">Mus musculus</name>
    <name type="common">Mouse</name>
    <dbReference type="NCBI Taxonomy" id="10090"/>
    <lineage>
        <taxon>Eukaryota</taxon>
        <taxon>Metazoa</taxon>
        <taxon>Chordata</taxon>
        <taxon>Craniata</taxon>
        <taxon>Vertebrata</taxon>
        <taxon>Euteleostomi</taxon>
        <taxon>Mammalia</taxon>
        <taxon>Eutheria</taxon>
        <taxon>Euarchontoglires</taxon>
        <taxon>Glires</taxon>
        <taxon>Rodentia</taxon>
        <taxon>Myomorpha</taxon>
        <taxon>Muroidea</taxon>
        <taxon>Muridae</taxon>
        <taxon>Murinae</taxon>
        <taxon>Mus</taxon>
        <taxon>Mus</taxon>
    </lineage>
</organism>
<feature type="chain" id="PRO_0000100790" description="Phospholipid scramblase 3">
    <location>
        <begin position="1"/>
        <end position="296"/>
    </location>
</feature>
<feature type="topological domain" description="Mitochondrial intermembrane" evidence="2">
    <location>
        <begin position="1"/>
        <end position="266"/>
    </location>
</feature>
<feature type="transmembrane region" description="Helical" evidence="4">
    <location>
        <begin position="267"/>
        <end position="283"/>
    </location>
</feature>
<feature type="region of interest" description="Proline-rich domain (PRD)" evidence="1">
    <location>
        <begin position="1"/>
        <end position="58"/>
    </location>
</feature>
<feature type="region of interest" description="Disordered" evidence="5">
    <location>
        <begin position="1"/>
        <end position="45"/>
    </location>
</feature>
<feature type="short sequence motif" description="SH3-binding 1" evidence="4">
    <location>
        <begin position="7"/>
        <end position="15"/>
    </location>
</feature>
<feature type="short sequence motif" description="PPxY motif" evidence="4">
    <location>
        <begin position="15"/>
        <end position="18"/>
    </location>
</feature>
<feature type="short sequence motif" description="SH3-binding 2" evidence="4">
    <location>
        <begin position="21"/>
        <end position="27"/>
    </location>
</feature>
<feature type="short sequence motif" description="SH3-binding 3" evidence="4">
    <location>
        <begin position="66"/>
        <end position="71"/>
    </location>
</feature>
<feature type="compositionally biased region" description="Low complexity" evidence="5">
    <location>
        <begin position="1"/>
        <end position="11"/>
    </location>
</feature>
<feature type="compositionally biased region" description="Pro residues" evidence="5">
    <location>
        <begin position="12"/>
        <end position="24"/>
    </location>
</feature>
<feature type="compositionally biased region" description="Low complexity" evidence="5">
    <location>
        <begin position="25"/>
        <end position="34"/>
    </location>
</feature>
<feature type="compositionally biased region" description="Pro residues" evidence="5">
    <location>
        <begin position="35"/>
        <end position="45"/>
    </location>
</feature>
<feature type="lipid moiety-binding region" description="S-palmitoyl cysteine" evidence="7">
    <location>
        <position position="159"/>
    </location>
</feature>
<feature type="lipid moiety-binding region" description="S-palmitoyl cysteine" evidence="7">
    <location>
        <position position="161"/>
    </location>
</feature>
<feature type="lipid moiety-binding region" description="S-palmitoyl cysteine" evidence="7">
    <location>
        <position position="163"/>
    </location>
</feature>
<feature type="lipid moiety-binding region" description="S-palmitoyl cysteine" evidence="7">
    <location>
        <position position="164"/>
    </location>
</feature>
<feature type="lipid moiety-binding region" description="S-palmitoyl cysteine" evidence="7">
    <location>
        <position position="166"/>
    </location>
</feature>
<feature type="mutagenesis site" description="Complete loss of palmitoylation, mislocalization from mitochondrial membrane to nucleus and reduced apoptotic function; when associated with A-161, A-163, A-164 and A-166. Partial loss of palmitoylation; when associated with A-161." evidence="7">
    <original>C</original>
    <variation>A</variation>
    <location>
        <position position="159"/>
    </location>
</feature>
<feature type="mutagenesis site" description="Complete loss of palmitoylation, mislocalization from mitochondrial membrane to nucleus and reduced apoptotic function; when associated with A-159, A-163, A-164 and A-166. Partial loss of palmitoylation; when associated with A-159." evidence="7">
    <original>C</original>
    <variation>A</variation>
    <location>
        <position position="161"/>
    </location>
</feature>
<feature type="mutagenesis site" description="Complete loss of palmitoylation, mislocalization from mitochondrial membrane to nucleus and reduced apoptotic function; when associated with A-159, A-161, A-164 and A-166." evidence="7">
    <original>C</original>
    <variation>A</variation>
    <location>
        <position position="163"/>
    </location>
</feature>
<feature type="mutagenesis site" description="Complete loss of palmitoylation, mislocalization from mitochondrial membrane and reduced apoptotic function; when associated with A-159, A-161, A-163 and A-166." evidence="7">
    <original>C</original>
    <variation>A</variation>
    <location>
        <position position="164"/>
    </location>
</feature>
<feature type="mutagenesis site" description="Complete loss of palmitoylation, mislocalization from mitochondrial membrane to nucleus and reduced apoptotic function; when associated with A-159, A-161, A-163 and A-164." evidence="7">
    <original>C</original>
    <variation>A</variation>
    <location>
        <position position="166"/>
    </location>
</feature>
<protein>
    <recommendedName>
        <fullName>Phospholipid scramblase 3</fullName>
        <shortName>PL scramblase 3</shortName>
    </recommendedName>
    <alternativeName>
        <fullName>Ca(2+)-dependent phospholipid scramblase 3</fullName>
    </alternativeName>
</protein>
<evidence type="ECO:0000250" key="1">
    <source>
        <dbReference type="UniProtKB" id="O15162"/>
    </source>
</evidence>
<evidence type="ECO:0000250" key="2">
    <source>
        <dbReference type="UniProtKB" id="Q6QBQ4"/>
    </source>
</evidence>
<evidence type="ECO:0000250" key="3">
    <source>
        <dbReference type="UniProtKB" id="Q9NRY6"/>
    </source>
</evidence>
<evidence type="ECO:0000255" key="4"/>
<evidence type="ECO:0000256" key="5">
    <source>
        <dbReference type="SAM" id="MobiDB-lite"/>
    </source>
</evidence>
<evidence type="ECO:0000269" key="6">
    <source>
    </source>
</evidence>
<evidence type="ECO:0000269" key="7">
    <source>
    </source>
</evidence>
<evidence type="ECO:0000305" key="8"/>
<evidence type="ECO:0000305" key="9">
    <source>
    </source>
</evidence>
<accession>Q9JIZ9</accession>
<dbReference type="EMBL" id="AF159850">
    <property type="protein sequence ID" value="AAF89526.1"/>
    <property type="molecule type" value="mRNA"/>
</dbReference>
<dbReference type="EMBL" id="AK011716">
    <property type="protein sequence ID" value="BAB27797.1"/>
    <property type="molecule type" value="mRNA"/>
</dbReference>
<dbReference type="EMBL" id="AK029154">
    <property type="protein sequence ID" value="BAC26329.1"/>
    <property type="molecule type" value="mRNA"/>
</dbReference>
<dbReference type="EMBL" id="AK075841">
    <property type="protein sequence ID" value="BAC35999.1"/>
    <property type="molecule type" value="mRNA"/>
</dbReference>
<dbReference type="EMBL" id="BC020143">
    <property type="protein sequence ID" value="AAH20143.1"/>
    <property type="molecule type" value="mRNA"/>
</dbReference>
<dbReference type="CCDS" id="CCDS24916.1"/>
<dbReference type="RefSeq" id="NP_001161969.1">
    <property type="nucleotide sequence ID" value="NM_001168497.1"/>
</dbReference>
<dbReference type="RefSeq" id="NP_076053.1">
    <property type="nucleotide sequence ID" value="NM_023564.4"/>
</dbReference>
<dbReference type="RefSeq" id="XP_006534219.1">
    <property type="nucleotide sequence ID" value="XM_006534156.3"/>
</dbReference>
<dbReference type="RefSeq" id="XP_006534220.1">
    <property type="nucleotide sequence ID" value="XM_006534157.3"/>
</dbReference>
<dbReference type="RefSeq" id="XP_036012868.1">
    <property type="nucleotide sequence ID" value="XM_036156975.1"/>
</dbReference>
<dbReference type="BioGRID" id="213978">
    <property type="interactions" value="1"/>
</dbReference>
<dbReference type="FunCoup" id="Q9JIZ9">
    <property type="interactions" value="611"/>
</dbReference>
<dbReference type="STRING" id="10090.ENSMUSP00000104273"/>
<dbReference type="iPTMnet" id="Q9JIZ9"/>
<dbReference type="PhosphoSitePlus" id="Q9JIZ9"/>
<dbReference type="SwissPalm" id="Q9JIZ9"/>
<dbReference type="PaxDb" id="10090-ENSMUSP00000104272"/>
<dbReference type="ProteomicsDB" id="289549"/>
<dbReference type="Pumba" id="Q9JIZ9"/>
<dbReference type="Antibodypedia" id="24083">
    <property type="antibodies" value="174 antibodies from 26 providers"/>
</dbReference>
<dbReference type="DNASU" id="70310"/>
<dbReference type="Ensembl" id="ENSMUST00000019605.4">
    <property type="protein sequence ID" value="ENSMUSP00000019605.3"/>
    <property type="gene ID" value="ENSMUSG00000019461.13"/>
</dbReference>
<dbReference type="Ensembl" id="ENSMUST00000108632.8">
    <property type="protein sequence ID" value="ENSMUSP00000104272.2"/>
    <property type="gene ID" value="ENSMUSG00000019461.13"/>
</dbReference>
<dbReference type="Ensembl" id="ENSMUST00000108633.9">
    <property type="protein sequence ID" value="ENSMUSP00000104273.3"/>
    <property type="gene ID" value="ENSMUSG00000019461.13"/>
</dbReference>
<dbReference type="GeneID" id="70310"/>
<dbReference type="KEGG" id="mmu:70310"/>
<dbReference type="UCSC" id="uc007jrz.2">
    <property type="organism name" value="mouse"/>
</dbReference>
<dbReference type="AGR" id="MGI:1917560"/>
<dbReference type="CTD" id="57048"/>
<dbReference type="MGI" id="MGI:1917560">
    <property type="gene designation" value="Plscr3"/>
</dbReference>
<dbReference type="VEuPathDB" id="HostDB:ENSMUSG00000019461"/>
<dbReference type="eggNOG" id="KOG0621">
    <property type="taxonomic scope" value="Eukaryota"/>
</dbReference>
<dbReference type="GeneTree" id="ENSGT00940000161755"/>
<dbReference type="HOGENOM" id="CLU_053024_1_0_1"/>
<dbReference type="InParanoid" id="Q9JIZ9"/>
<dbReference type="OMA" id="MNEQAQH"/>
<dbReference type="OrthoDB" id="444338at2759"/>
<dbReference type="PhylomeDB" id="Q9JIZ9"/>
<dbReference type="TreeFam" id="TF314939"/>
<dbReference type="BioGRID-ORCS" id="70310">
    <property type="hits" value="2 hits in 79 CRISPR screens"/>
</dbReference>
<dbReference type="ChiTaRS" id="Plscr3">
    <property type="organism name" value="mouse"/>
</dbReference>
<dbReference type="PRO" id="PR:Q9JIZ9"/>
<dbReference type="Proteomes" id="UP000000589">
    <property type="component" value="Chromosome 11"/>
</dbReference>
<dbReference type="RNAct" id="Q9JIZ9">
    <property type="molecule type" value="protein"/>
</dbReference>
<dbReference type="Bgee" id="ENSMUSG00000019461">
    <property type="expression patterns" value="Expressed in lip and 242 other cell types or tissues"/>
</dbReference>
<dbReference type="ExpressionAtlas" id="Q9JIZ9">
    <property type="expression patterns" value="baseline and differential"/>
</dbReference>
<dbReference type="GO" id="GO:0005829">
    <property type="term" value="C:cytosol"/>
    <property type="evidence" value="ECO:0007669"/>
    <property type="project" value="Ensembl"/>
</dbReference>
<dbReference type="GO" id="GO:0005743">
    <property type="term" value="C:mitochondrial inner membrane"/>
    <property type="evidence" value="ECO:0000250"/>
    <property type="project" value="UniProtKB"/>
</dbReference>
<dbReference type="GO" id="GO:0005739">
    <property type="term" value="C:mitochondrion"/>
    <property type="evidence" value="ECO:0000314"/>
    <property type="project" value="UniProtKB"/>
</dbReference>
<dbReference type="GO" id="GO:0005634">
    <property type="term" value="C:nucleus"/>
    <property type="evidence" value="ECO:0000314"/>
    <property type="project" value="UniProtKB"/>
</dbReference>
<dbReference type="GO" id="GO:0005886">
    <property type="term" value="C:plasma membrane"/>
    <property type="evidence" value="ECO:0007669"/>
    <property type="project" value="Ensembl"/>
</dbReference>
<dbReference type="GO" id="GO:0005509">
    <property type="term" value="F:calcium ion binding"/>
    <property type="evidence" value="ECO:0000250"/>
    <property type="project" value="UniProtKB"/>
</dbReference>
<dbReference type="GO" id="GO:0048306">
    <property type="term" value="F:calcium-dependent protein binding"/>
    <property type="evidence" value="ECO:0007669"/>
    <property type="project" value="Ensembl"/>
</dbReference>
<dbReference type="GO" id="GO:0032791">
    <property type="term" value="F:lead ion binding"/>
    <property type="evidence" value="ECO:0000250"/>
    <property type="project" value="UniProtKB"/>
</dbReference>
<dbReference type="GO" id="GO:0000287">
    <property type="term" value="F:magnesium ion binding"/>
    <property type="evidence" value="ECO:0000250"/>
    <property type="project" value="UniProtKB"/>
</dbReference>
<dbReference type="GO" id="GO:0045340">
    <property type="term" value="F:mercury ion binding"/>
    <property type="evidence" value="ECO:0000250"/>
    <property type="project" value="UniProtKB"/>
</dbReference>
<dbReference type="GO" id="GO:0017128">
    <property type="term" value="F:phospholipid scramblase activity"/>
    <property type="evidence" value="ECO:0000250"/>
    <property type="project" value="UniProtKB"/>
</dbReference>
<dbReference type="GO" id="GO:0017124">
    <property type="term" value="F:SH3 domain binding"/>
    <property type="evidence" value="ECO:0007669"/>
    <property type="project" value="UniProtKB-KW"/>
</dbReference>
<dbReference type="GO" id="GO:0006915">
    <property type="term" value="P:apoptotic process"/>
    <property type="evidence" value="ECO:0000315"/>
    <property type="project" value="UniProtKB"/>
</dbReference>
<dbReference type="GO" id="GO:0071222">
    <property type="term" value="P:cellular response to lipopolysaccharide"/>
    <property type="evidence" value="ECO:0000270"/>
    <property type="project" value="UniProtKB"/>
</dbReference>
<dbReference type="GO" id="GO:0042632">
    <property type="term" value="P:cholesterol homeostasis"/>
    <property type="evidence" value="ECO:0000315"/>
    <property type="project" value="MGI"/>
</dbReference>
<dbReference type="GO" id="GO:0042593">
    <property type="term" value="P:glucose homeostasis"/>
    <property type="evidence" value="ECO:0000315"/>
    <property type="project" value="MGI"/>
</dbReference>
<dbReference type="GO" id="GO:0007006">
    <property type="term" value="P:mitochondrial membrane organization"/>
    <property type="evidence" value="ECO:0000250"/>
    <property type="project" value="UniProtKB"/>
</dbReference>
<dbReference type="GO" id="GO:0042981">
    <property type="term" value="P:regulation of apoptotic process"/>
    <property type="evidence" value="ECO:0000250"/>
    <property type="project" value="UniProtKB"/>
</dbReference>
<dbReference type="GO" id="GO:0090199">
    <property type="term" value="P:regulation of release of cytochrome c from mitochondria"/>
    <property type="evidence" value="ECO:0000250"/>
    <property type="project" value="UniProtKB"/>
</dbReference>
<dbReference type="InterPro" id="IPR005552">
    <property type="entry name" value="Scramblase"/>
</dbReference>
<dbReference type="PANTHER" id="PTHR23248:SF37">
    <property type="entry name" value="PHOSPHOLIPID SCRAMBLASE 3"/>
    <property type="match status" value="1"/>
</dbReference>
<dbReference type="PANTHER" id="PTHR23248">
    <property type="entry name" value="PHOSPHOLIPID SCRAMBLASE-RELATED"/>
    <property type="match status" value="1"/>
</dbReference>
<dbReference type="Pfam" id="PF03803">
    <property type="entry name" value="Scramblase"/>
    <property type="match status" value="1"/>
</dbReference>
<name>PLS3_MOUSE</name>
<comment type="function">
    <text evidence="3 9">Catalyzes calcium-induced ATP-independent rapid bidirectional and non-specific movement of the phospholipids (lipid scrambling or lipid flip-flop) between the inner and outer membrane of the mitochondria (By similarity). Plays an important role in mitochondrial respiratory function, morphology, and apoptotic response (By similarity). Mediates the translocation of cardiolipin from the mitochondrial inner membrane to outer membrane enhancing t-Bid induced cytochrome c release and apoptosis (Probable). Enhances TNFSF10-induced apoptosis by regulating the distribution of cardiolipin in the mitochondrial membrane resulting in increased release of apoptogenic factors and consequent amplification of the activity of caspases (By similarity). Regulates cardiolipin de novo biosynthesis and its resynthesis (By similarity).</text>
</comment>
<comment type="catalytic activity">
    <reaction evidence="9">
        <text>a cardiolipin(in) = a cardiolipin(out)</text>
        <dbReference type="Rhea" id="RHEA:38695"/>
        <dbReference type="ChEBI" id="CHEBI:62237"/>
    </reaction>
    <physiologicalReaction direction="left-to-right" evidence="9">
        <dbReference type="Rhea" id="RHEA:38696"/>
    </physiologicalReaction>
</comment>
<comment type="catalytic activity">
    <reaction evidence="3">
        <text>a 1,2-diacyl-sn-glycero-3-phosphoethanolamine(in) = a 1,2-diacyl-sn-glycero-3-phosphoethanolamine(out)</text>
        <dbReference type="Rhea" id="RHEA:38895"/>
        <dbReference type="ChEBI" id="CHEBI:64612"/>
    </reaction>
    <physiologicalReaction direction="left-to-right" evidence="3">
        <dbReference type="Rhea" id="RHEA:38896"/>
    </physiologicalReaction>
</comment>
<comment type="catalytic activity">
    <reaction evidence="3">
        <text>a 1,2-diacyl-sn-glycero-3-phosphocholine(in) = a 1,2-diacyl-sn-glycero-3-phosphocholine(out)</text>
        <dbReference type="Rhea" id="RHEA:38571"/>
        <dbReference type="ChEBI" id="CHEBI:57643"/>
    </reaction>
    <physiologicalReaction direction="left-to-right" evidence="3">
        <dbReference type="Rhea" id="RHEA:38572"/>
    </physiologicalReaction>
    <physiologicalReaction direction="right-to-left" evidence="3">
        <dbReference type="Rhea" id="RHEA:38573"/>
    </physiologicalReaction>
</comment>
<comment type="catalytic activity">
    <reaction evidence="3">
        <text>a 1,2-diacyl-sn-glycero-3-phospho-L-serine(in) = a 1,2-diacyl-sn-glycero-3-phospho-L-serine(out)</text>
        <dbReference type="Rhea" id="RHEA:38663"/>
        <dbReference type="ChEBI" id="CHEBI:57262"/>
    </reaction>
    <physiologicalReaction direction="left-to-right" evidence="3">
        <dbReference type="Rhea" id="RHEA:38664"/>
    </physiologicalReaction>
</comment>
<comment type="catalytic activity">
    <reaction evidence="3">
        <text>a 1,2-diacyl-sn-glycero-3-phospho-(1'-sn-glycerol)(in) = a 1,2-diacyl-sn-glycero-3-phospho-(1'-sn-glycerol)(out)</text>
        <dbReference type="Rhea" id="RHEA:39743"/>
        <dbReference type="ChEBI" id="CHEBI:64716"/>
    </reaction>
    <physiologicalReaction direction="left-to-right" evidence="3">
        <dbReference type="Rhea" id="RHEA:39744"/>
    </physiologicalReaction>
</comment>
<comment type="cofactor">
    <cofactor evidence="3">
        <name>Ca(2+)</name>
        <dbReference type="ChEBI" id="CHEBI:29108"/>
    </cofactor>
    <cofactor evidence="3">
        <name>Mg(2+)</name>
        <dbReference type="ChEBI" id="CHEBI:18420"/>
    </cofactor>
</comment>
<comment type="subunit">
    <text evidence="3 6">Monomer (By similarity). Forms homooligomers upon binding to Ca(2+), Pb(2+) and Hg(2+) ions (By similarity). Interacts with PDCD6 in a calcium-dependent manner (By similarity). Interacts with PRKCD; interaction is enhanced by UV irradiation (PubMed:19428821).</text>
</comment>
<comment type="subcellular location">
    <subcellularLocation>
        <location evidence="7">Mitochondrion membrane</location>
        <topology evidence="2">Single-pass type II membrane protein</topology>
    </subcellularLocation>
    <subcellularLocation>
        <location evidence="2">Mitochondrion inner membrane</location>
        <topology evidence="2">Single-pass type II membrane protein</topology>
    </subcellularLocation>
    <subcellularLocation>
        <location evidence="7">Nucleus</location>
    </subcellularLocation>
    <text evidence="7">Palmitoylation regulates its localization to the cell membrane or the nucleus; trafficking to the cell membrane is dependent upon palmitoylation whereas in the absence of palmitoylation, localizes to the nucleus.</text>
</comment>
<comment type="domain">
    <text evidence="1">The Proline-rich domain is required for phospholipid scramblase activity.</text>
</comment>
<comment type="PTM">
    <text evidence="7">Palmitoylation regulates its localization to the cell membrane or the nucleus; trafficking to the cell membrane is dependent upon palmitoylation whereas in the absence of palmitoylation, localizes to the nucleus.</text>
</comment>
<comment type="similarity">
    <text evidence="8">Belongs to the phospholipid scramblase family.</text>
</comment>
<sequence>MAGYLPPKGYAPSPPPPYPVPSGYPEPVALHPGPGQAPVPTQVPAPAPGFALFPSPGPVAPGPPAPFVPLPGVPPGLEFLVQIDQILIHQKAERVETFLGWETCNMYELRSGTGQQLGQAAEESNCCARLCCGARRPFRIRLADPGDREVLRLLRPLHCGCSCCPCGLQEMEVQAPPGTTIGHVLQTWHPFLPKFSILDADRQPVLRVVGPCWTCGCGTDTNFEVKTKDESRSVGRISKQWGGLLREALTDADDFGLQFPVDLDVKVKAVLLGATFLIDYMFFEKRGGAGPSAITS</sequence>
<gene>
    <name type="primary">Plscr3</name>
</gene>